<name>S12A3_MOUSE</name>
<dbReference type="EMBL" id="BC038612">
    <property type="protein sequence ID" value="AAH38612.1"/>
    <property type="molecule type" value="mRNA"/>
</dbReference>
<dbReference type="CCDS" id="CCDS57632.1"/>
<dbReference type="RefSeq" id="NP_001192240.1">
    <property type="nucleotide sequence ID" value="NM_001205311.1"/>
</dbReference>
<dbReference type="SMR" id="P59158"/>
<dbReference type="BioGRID" id="203278">
    <property type="interactions" value="2"/>
</dbReference>
<dbReference type="CORUM" id="P59158"/>
<dbReference type="FunCoup" id="P59158">
    <property type="interactions" value="87"/>
</dbReference>
<dbReference type="IntAct" id="P59158">
    <property type="interactions" value="1"/>
</dbReference>
<dbReference type="STRING" id="10090.ENSMUSP00000034218"/>
<dbReference type="GlyCosmos" id="P59158">
    <property type="glycosylation" value="4 sites, No reported glycans"/>
</dbReference>
<dbReference type="GlyGen" id="P59158">
    <property type="glycosylation" value="2 sites"/>
</dbReference>
<dbReference type="iPTMnet" id="P59158"/>
<dbReference type="PhosphoSitePlus" id="P59158"/>
<dbReference type="jPOST" id="P59158"/>
<dbReference type="PaxDb" id="10090-ENSMUSP00000034218"/>
<dbReference type="PeptideAtlas" id="P59158"/>
<dbReference type="ProteomicsDB" id="253338"/>
<dbReference type="Antibodypedia" id="28680">
    <property type="antibodies" value="227 antibodies from 22 providers"/>
</dbReference>
<dbReference type="DNASU" id="20497"/>
<dbReference type="Ensembl" id="ENSMUST00000034218.5">
    <property type="protein sequence ID" value="ENSMUSP00000034218.4"/>
    <property type="gene ID" value="ENSMUSG00000031766.5"/>
</dbReference>
<dbReference type="GeneID" id="20497"/>
<dbReference type="KEGG" id="mmu:20497"/>
<dbReference type="UCSC" id="uc009mwc.2">
    <property type="organism name" value="mouse"/>
</dbReference>
<dbReference type="AGR" id="MGI:108114"/>
<dbReference type="CTD" id="6559"/>
<dbReference type="MGI" id="MGI:108114">
    <property type="gene designation" value="Slc12a3"/>
</dbReference>
<dbReference type="VEuPathDB" id="HostDB:ENSMUSG00000031766"/>
<dbReference type="eggNOG" id="KOG2083">
    <property type="taxonomic scope" value="Eukaryota"/>
</dbReference>
<dbReference type="GeneTree" id="ENSGT00940000155044"/>
<dbReference type="HOGENOM" id="CLU_001883_0_0_1"/>
<dbReference type="InParanoid" id="P59158"/>
<dbReference type="OMA" id="PWMITEQ"/>
<dbReference type="OrthoDB" id="2020542at2759"/>
<dbReference type="PhylomeDB" id="P59158"/>
<dbReference type="TreeFam" id="TF313191"/>
<dbReference type="Reactome" id="R-MMU-426117">
    <property type="pathway name" value="Cation-coupled Chloride cotransporters"/>
</dbReference>
<dbReference type="BioGRID-ORCS" id="20497">
    <property type="hits" value="2 hits in 78 CRISPR screens"/>
</dbReference>
<dbReference type="ChiTaRS" id="Slc12a3">
    <property type="organism name" value="mouse"/>
</dbReference>
<dbReference type="PRO" id="PR:P59158"/>
<dbReference type="Proteomes" id="UP000000589">
    <property type="component" value="Chromosome 8"/>
</dbReference>
<dbReference type="RNAct" id="P59158">
    <property type="molecule type" value="protein"/>
</dbReference>
<dbReference type="Bgee" id="ENSMUSG00000031766">
    <property type="expression patterns" value="Expressed in right kidney and 30 other cell types or tissues"/>
</dbReference>
<dbReference type="ExpressionAtlas" id="P59158">
    <property type="expression patterns" value="baseline and differential"/>
</dbReference>
<dbReference type="GO" id="GO:0016324">
    <property type="term" value="C:apical plasma membrane"/>
    <property type="evidence" value="ECO:0000314"/>
    <property type="project" value="UniProtKB"/>
</dbReference>
<dbReference type="GO" id="GO:0005829">
    <property type="term" value="C:cytosol"/>
    <property type="evidence" value="ECO:0000314"/>
    <property type="project" value="UniProtKB"/>
</dbReference>
<dbReference type="GO" id="GO:0070062">
    <property type="term" value="C:extracellular exosome"/>
    <property type="evidence" value="ECO:0007669"/>
    <property type="project" value="Ensembl"/>
</dbReference>
<dbReference type="GO" id="GO:0005886">
    <property type="term" value="C:plasma membrane"/>
    <property type="evidence" value="ECO:0000314"/>
    <property type="project" value="UniProtKB"/>
</dbReference>
<dbReference type="GO" id="GO:0005524">
    <property type="term" value="F:ATP binding"/>
    <property type="evidence" value="ECO:0007669"/>
    <property type="project" value="UniProtKB-KW"/>
</dbReference>
<dbReference type="GO" id="GO:0046872">
    <property type="term" value="F:metal ion binding"/>
    <property type="evidence" value="ECO:0007669"/>
    <property type="project" value="UniProtKB-KW"/>
</dbReference>
<dbReference type="GO" id="GO:0015081">
    <property type="term" value="F:sodium ion transmembrane transporter activity"/>
    <property type="evidence" value="ECO:0000314"/>
    <property type="project" value="UniProtKB"/>
</dbReference>
<dbReference type="GO" id="GO:0015378">
    <property type="term" value="F:sodium:chloride symporter activity"/>
    <property type="evidence" value="ECO:0000314"/>
    <property type="project" value="UniProtKB"/>
</dbReference>
<dbReference type="GO" id="GO:0070294">
    <property type="term" value="P:renal sodium ion absorption"/>
    <property type="evidence" value="ECO:0007669"/>
    <property type="project" value="Ensembl"/>
</dbReference>
<dbReference type="GO" id="GO:1904044">
    <property type="term" value="P:response to aldosterone"/>
    <property type="evidence" value="ECO:0000314"/>
    <property type="project" value="MGI"/>
</dbReference>
<dbReference type="GO" id="GO:1902074">
    <property type="term" value="P:response to salt"/>
    <property type="evidence" value="ECO:0000314"/>
    <property type="project" value="MGI"/>
</dbReference>
<dbReference type="GO" id="GO:0035725">
    <property type="term" value="P:sodium ion transmembrane transport"/>
    <property type="evidence" value="ECO:0000314"/>
    <property type="project" value="MGI"/>
</dbReference>
<dbReference type="GO" id="GO:0006814">
    <property type="term" value="P:sodium ion transport"/>
    <property type="evidence" value="ECO:0000315"/>
    <property type="project" value="UniProtKB"/>
</dbReference>
<dbReference type="FunFam" id="1.20.1740.10:FF:000018">
    <property type="entry name" value="solute carrier family 12 member 3 isoform X2"/>
    <property type="match status" value="1"/>
</dbReference>
<dbReference type="Gene3D" id="1.20.1740.10">
    <property type="entry name" value="Amino acid/polyamine transporter I"/>
    <property type="match status" value="1"/>
</dbReference>
<dbReference type="InterPro" id="IPR004841">
    <property type="entry name" value="AA-permease/SLC12A_dom"/>
</dbReference>
<dbReference type="InterPro" id="IPR013612">
    <property type="entry name" value="AA_permease_N"/>
</dbReference>
<dbReference type="InterPro" id="IPR018491">
    <property type="entry name" value="SLC12_C"/>
</dbReference>
<dbReference type="InterPro" id="IPR002948">
    <property type="entry name" value="SLC12A3"/>
</dbReference>
<dbReference type="InterPro" id="IPR004842">
    <property type="entry name" value="SLC12A_fam"/>
</dbReference>
<dbReference type="NCBIfam" id="TIGR00930">
    <property type="entry name" value="2a30"/>
    <property type="match status" value="1"/>
</dbReference>
<dbReference type="PANTHER" id="PTHR11827:SF9">
    <property type="entry name" value="SOLUTE CARRIER FAMILY 12 MEMBER 3"/>
    <property type="match status" value="1"/>
</dbReference>
<dbReference type="PANTHER" id="PTHR11827">
    <property type="entry name" value="SOLUTE CARRIER FAMILY 12, CATION COTRANSPORTERS"/>
    <property type="match status" value="1"/>
</dbReference>
<dbReference type="Pfam" id="PF00324">
    <property type="entry name" value="AA_permease"/>
    <property type="match status" value="1"/>
</dbReference>
<dbReference type="Pfam" id="PF08403">
    <property type="entry name" value="AA_permease_N"/>
    <property type="match status" value="1"/>
</dbReference>
<dbReference type="Pfam" id="PF03522">
    <property type="entry name" value="SLC12"/>
    <property type="match status" value="2"/>
</dbReference>
<dbReference type="PRINTS" id="PR01230">
    <property type="entry name" value="NACLTRNSPORT"/>
</dbReference>
<protein>
    <recommendedName>
        <fullName>Solute carrier family 12 member 3</fullName>
    </recommendedName>
    <alternativeName>
        <fullName>Na-Cl symporter</fullName>
    </alternativeName>
    <alternativeName>
        <fullName evidence="11">Thiazide-sensitive sodium-chloride cotransporter</fullName>
    </alternativeName>
</protein>
<reference key="1">
    <citation type="journal article" date="2004" name="Genome Res.">
        <title>The status, quality, and expansion of the NIH full-length cDNA project: the Mammalian Gene Collection (MGC).</title>
        <authorList>
            <consortium name="The MGC Project Team"/>
        </authorList>
    </citation>
    <scope>NUCLEOTIDE SEQUENCE [LARGE SCALE MRNA]</scope>
    <source>
        <strain>FVB/N</strain>
        <tissue>Kidney</tissue>
    </source>
</reference>
<reference key="2">
    <citation type="journal article" date="2004" name="Am. J. Physiol.">
        <title>Pathophysiology of functional mutations of the thiazide-sensitive Na-Cl cotransporter in Gitelman disease.</title>
        <authorList>
            <person name="Sabath E."/>
            <person name="Meade P."/>
            <person name="Berkman J."/>
            <person name="de los Heros P."/>
            <person name="Moreno E."/>
            <person name="Bobadilla N.A."/>
            <person name="Vazquez N."/>
            <person name="Ellison D.H."/>
            <person name="Gamba G."/>
        </authorList>
    </citation>
    <scope>FUNCTION</scope>
    <scope>TRANSPORTER ACTIVITY</scope>
    <scope>ACTIVITY REGULATION</scope>
    <scope>BIOPHYSICOCHEMICAL PROPERTIES</scope>
    <scope>MUTAGENESIS OF ALA-224; PRO-347; ALA-586; GLY-611; GLY-628; LEU-831; ARG-833; ARG-900; ARG-936; 949-ARG--GLN-1002; 990-ARG--GLN-1002; VAL-996 AND THR-998</scope>
</reference>
<reference key="3">
    <citation type="journal article" date="2005" name="J. Biol. Chem.">
        <title>WNK1 regulates phosphorylation of cation-chloride-coupled cotransporters via the STE20-related kinases, SPAK and OSR1.</title>
        <authorList>
            <person name="Moriguchi T."/>
            <person name="Urushiyama S."/>
            <person name="Hisamoto N."/>
            <person name="Iemura S."/>
            <person name="Uchida S."/>
            <person name="Natsume T."/>
            <person name="Matsumoto K."/>
            <person name="Shibuya H."/>
        </authorList>
    </citation>
    <scope>ACTIVITY REGULATION</scope>
    <scope>PHOSPHORYLATION AT THR-53; THR-58 AND SER-71</scope>
    <scope>MUTAGENESIS OF THR-53; THR-58 AND SER-71</scope>
</reference>
<reference key="4">
    <citation type="journal article" date="2007" name="Cell Metab.">
        <title>Molecular pathogenesis of pseudohypoaldosteronism type II: generation and analysis of a Wnk4(D561A/+) knockin mouse model.</title>
        <authorList>
            <person name="Yang S.S."/>
            <person name="Morimoto T."/>
            <person name="Rai T."/>
            <person name="Chiga M."/>
            <person name="Sohara E."/>
            <person name="Ohno M."/>
            <person name="Uchida K."/>
            <person name="Lin S.H."/>
            <person name="Moriguchi T."/>
            <person name="Shibuya H."/>
            <person name="Kondo Y."/>
            <person name="Sasaki S."/>
            <person name="Uchida S."/>
        </authorList>
    </citation>
    <scope>FUNCTION</scope>
    <scope>ACTIVITY REGULATION</scope>
    <scope>PHOSPHORYLATION</scope>
</reference>
<reference key="5">
    <citation type="journal article" date="2009" name="Hum. Mol. Genet.">
        <title>Targeted disruption of the Wnk4 gene decreases phosphorylation of Na-Cl cotransporter, increases Na excretion and lowers blood pressure.</title>
        <authorList>
            <person name="Ohta A."/>
            <person name="Rai T."/>
            <person name="Yui N."/>
            <person name="Chiga M."/>
            <person name="Yang S.S."/>
            <person name="Lin S.H."/>
            <person name="Sohara E."/>
            <person name="Sasaki S."/>
            <person name="Uchida S."/>
        </authorList>
    </citation>
    <scope>FUNCTION</scope>
    <scope>ACTIVITY REGULATION</scope>
    <scope>PHOSPHORYLATION</scope>
</reference>
<reference key="6">
    <citation type="journal article" date="2010" name="Am. J. Physiol.">
        <title>RasGRP1 stimulation enhances ubiquitination and endocytosis of the sodium-chloride cotransporter.</title>
        <authorList>
            <person name="Ko B."/>
            <person name="Kamsteeg E.J."/>
            <person name="Cooke L.L."/>
            <person name="Moddes L.N."/>
            <person name="Deen P.M."/>
            <person name="Hoover R.S."/>
        </authorList>
    </citation>
    <scope>UBIQUITINATION</scope>
</reference>
<reference key="7">
    <citation type="journal article" date="2010" name="Cell">
        <title>A tissue-specific atlas of mouse protein phosphorylation and expression.</title>
        <authorList>
            <person name="Huttlin E.L."/>
            <person name="Jedrychowski M.P."/>
            <person name="Elias J.E."/>
            <person name="Goswami T."/>
            <person name="Rad R."/>
            <person name="Beausoleil S.A."/>
            <person name="Villen J."/>
            <person name="Haas W."/>
            <person name="Sowa M.E."/>
            <person name="Gygi S.P."/>
        </authorList>
    </citation>
    <scope>PHOSPHORYLATION [LARGE SCALE ANALYSIS] AT SER-41; SER-47; THR-48; THR-53; THR-58; SER-71; THR-122 AND SER-124</scope>
    <scope>IDENTIFICATION BY MASS SPECTROMETRY [LARGE SCALE ANALYSIS]</scope>
    <source>
        <tissue>Kidney</tissue>
    </source>
</reference>
<reference key="8">
    <citation type="journal article" date="2015" name="Nat. Med.">
        <title>Interleukin 18 function in atherosclerosis is mediated by the interleukin 18 receptor and the Na-Cl co-transporter.</title>
        <authorList>
            <person name="Wang J."/>
            <person name="Sun C."/>
            <person name="Gerdes N."/>
            <person name="Liu C."/>
            <person name="Liao M."/>
            <person name="Liu J."/>
            <person name="Shi M.A."/>
            <person name="He A."/>
            <person name="Zhou Y."/>
            <person name="Sukhova G.K."/>
            <person name="Chen H."/>
            <person name="Cheng X.W."/>
            <person name="Kuzuya M."/>
            <person name="Murohara T."/>
            <person name="Zhang J."/>
            <person name="Cheng X."/>
            <person name="Jiang M."/>
            <person name="Shull G.E."/>
            <person name="Rogers S."/>
            <person name="Yang C.L."/>
            <person name="Ke Q."/>
            <person name="Jelen S."/>
            <person name="Bindels R."/>
            <person name="Ellison D.H."/>
            <person name="Jarolim P."/>
            <person name="Libby P."/>
            <person name="Shi G.P."/>
        </authorList>
    </citation>
    <scope>FUNCTION</scope>
    <scope>INTERACTION WITH IL18R1</scope>
    <scope>SUBCELLULAR LOCATION</scope>
    <scope>TISSUE SPECIFICITY</scope>
    <scope>INDUCTION BY IL1B; IL18 AND TNF</scope>
    <scope>DISRUPTION PHENOTYPE</scope>
    <scope>PHOSPHORYLATION</scope>
    <scope>MUTAGENESIS OF THR-53; THR-58 AND SER-71</scope>
</reference>
<reference key="9">
    <citation type="journal article" date="2018" name="Am. J. Physiol.">
        <title>H+-ATPase B1 subunit localizes to thick ascending limb and distal convoluted tubule of rodent and human kidney.</title>
        <authorList>
            <person name="Frische S."/>
            <person name="Chambrey R."/>
            <person name="Trepiccione F."/>
            <person name="Zamani R."/>
            <person name="Marcussen N."/>
            <person name="Alexander R.T."/>
            <person name="Skjoedt K."/>
            <person name="Svenningsen P."/>
            <person name="Dimke H."/>
        </authorList>
    </citation>
    <scope>SUBCELLULAR LOCATION</scope>
    <scope>TISSUE SPECIFICITY</scope>
</reference>
<reference key="10">
    <citation type="journal article" date="2022" name="Front. Med.">
        <title>R158Q and G212S, novel pathogenic compound heterozygous variants in SLC12A3 of Gitelman syndrome.</title>
        <authorList>
            <person name="Li Z."/>
            <person name="Wu H."/>
            <person name="Wei S."/>
            <person name="Liu M."/>
            <person name="Shi Y."/>
            <person name="Li M."/>
            <person name="Wang N."/>
            <person name="Fang L."/>
            <person name="Xiang B."/>
            <person name="Gao L."/>
            <person name="Xu C."/>
            <person name="Zhao J."/>
        </authorList>
    </citation>
    <scope>FUNCTION</scope>
    <scope>SUBCELLULAR LOCATION</scope>
    <scope>MUTAGENESIS OF ARG-156 AND GLY-210</scope>
</reference>
<comment type="function">
    <text evidence="3 5 6 8 10">Electroneutral sodium and chloride ion cotransporter, which acts as a key mediator of sodium and chloride reabsorption in kidney distal convoluted tubules (PubMed:15068971, PubMed:17488636, PubMed:19633012, PubMed:36370249). Also acts as a receptor for the pro-inflammatory cytokine IL18, thereby contributing to IL18-induced cytokine production, including IFNG, IL6, IL18 and CCL2 (PubMed:26099046). May act either independently of IL18R1, or in a complex with IL18R1 (PubMed:26099046).</text>
</comment>
<comment type="catalytic activity">
    <reaction evidence="3">
        <text>chloride(out) + Na(+)(out) = chloride(in) + Na(+)(in)</text>
        <dbReference type="Rhea" id="RHEA:73887"/>
        <dbReference type="ChEBI" id="CHEBI:17996"/>
        <dbReference type="ChEBI" id="CHEBI:29101"/>
    </reaction>
</comment>
<comment type="activity regulation">
    <text evidence="1 3 4 5 6">Phosphorylation by OXSR1/OSR1 and STK39/SPAK in kidney distal convoluted tubules promotes its activity (PubMed:16263722, PubMed:17488636, PubMed:19633012). Also activated by OXSR1/OSR1 and STK39/SPAK downstream of WNK3 (By similarity). Inhibited by thiazide-type diuretic metolazone (PubMed:15068971). Thiazide drugs, such as polythiazide, specifically inhibit SLC12A3/NCC transporter activity by competing with chloride for binding (By similarity).</text>
</comment>
<comment type="biophysicochemical properties">
    <kinetics>
        <KM evidence="3">7.23 mM for Na(+)</KM>
        <KM evidence="3">5.62 mM for Cl(-)</KM>
    </kinetics>
</comment>
<comment type="subunit">
    <text evidence="1 8">Homodimer; adopts a domain-swap conformation at the scissor helices connecting the transmembrane domain and C-terminal domain (By similarity). Interacts with KLHL3 (By similarity). Interacts with IL18R1; this interaction is increased by IL18 treatment (PubMed:26099046).</text>
</comment>
<comment type="interaction">
    <interactant intactId="EBI-8366645">
        <id>P59158</id>
    </interactant>
    <interactant intactId="EBI-13612516">
        <id>Q61098</id>
        <label>Il18r1</label>
    </interactant>
    <organismsDiffer>false</organismsDiffer>
    <experiments>5</experiments>
</comment>
<comment type="subcellular location">
    <subcellularLocation>
        <location evidence="8 10">Cell membrane</location>
        <topology evidence="2">Multi-pass membrane protein</topology>
    </subcellularLocation>
    <subcellularLocation>
        <location evidence="9">Apical cell membrane</location>
        <topology evidence="2">Multi-pass membrane protein</topology>
    </subcellularLocation>
</comment>
<comment type="tissue specificity">
    <text evidence="8 9">Expressed predominantly in kidney, including in distal tubules (at protein level). Detected at low levels in heart, lung and liver. Not detected in normal aorta, but abundantly expressed in fatty streaks and advanced atherosclerotic lesions. In atherosclerotic lesions, expressed in macrophages, smooth muscle cells and endothelial cells (at protein level).</text>
</comment>
<comment type="induction">
    <text evidence="8">In macrophages and T-lymphocytes, up-regulated by IL18. In endothelial cells and smooth muscle cells, up-regulated by IL1B, IL18 and TNF (at protein level).</text>
</comment>
<comment type="domain">
    <text evidence="1">Interaction between the cytoplasmic N-terminal and C-terminal domains (NTD and CTD, respectively) is essential for SLC12A3/NCC transporter activity. Phosphorylation by OXSR1/OSR1 and STK39/SPAK may activate SLC12A3/NCC by facilitating this interaction.</text>
</comment>
<comment type="PTM">
    <text evidence="7">Ubiquitinated; ubiquitination is essential for regulation of endocytosis.</text>
</comment>
<comment type="PTM">
    <text evidence="4 5 6 8">Phosphorylated at Thr-53, Thr-58 and Ser-71 by OXSR1/OSR1 and STK39/SPAK downstream of WNK4, promoting its activity (PubMed:16263722, PubMed:17488636, PubMed:19633012). Phosphorylated in response to IL18 (PubMed:26099046).</text>
</comment>
<comment type="disruption phenotype">
    <text evidence="8">Simultaneous knockout of APOE and SLC12A3 results lower plasma Mg(2+) compared to plasma levels in wild-type and APOE knockout animals. Simultaneous knockdown of APOE and SLC12A3 shows no significant differences in aortic root atherosclerotic lesion intima area and thoracic-abdominal aorta lipid deposition as compared to APOE and double APOE and IL18R1 knockout animals. In contrast, simultaneous knockdown of APOE, SLC12A3 and IL18R1 results in significantly smaller aortic root intimal size and decreased thoracic-abdominal aorta lipid deposition. The triple knockout mice exhibit lower plasma K(+) and Mg(2+) compared to plasma levels in wild-type animals. The effect on atherosclerosis is due to IL18 activation of bone marrow-derived leukocytes, and possibly vascular cells, rather than to kidney tubular disorders or electrolyte disturbances.</text>
</comment>
<comment type="similarity">
    <text evidence="13">Belongs to the SLC12A transporter family.</text>
</comment>
<keyword id="KW-0067">ATP-binding</keyword>
<keyword id="KW-1003">Cell membrane</keyword>
<keyword id="KW-0868">Chloride</keyword>
<keyword id="KW-1015">Disulfide bond</keyword>
<keyword id="KW-0325">Glycoprotein</keyword>
<keyword id="KW-0406">Ion transport</keyword>
<keyword id="KW-0472">Membrane</keyword>
<keyword id="KW-0479">Metal-binding</keyword>
<keyword id="KW-0547">Nucleotide-binding</keyword>
<keyword id="KW-0597">Phosphoprotein</keyword>
<keyword id="KW-1185">Reference proteome</keyword>
<keyword id="KW-0915">Sodium</keyword>
<keyword id="KW-0739">Sodium transport</keyword>
<keyword id="KW-0769">Symport</keyword>
<keyword id="KW-0812">Transmembrane</keyword>
<keyword id="KW-1133">Transmembrane helix</keyword>
<keyword id="KW-0813">Transport</keyword>
<keyword id="KW-0832">Ubl conjugation</keyword>
<gene>
    <name evidence="14" type="primary">Slc12a3</name>
    <name evidence="12" type="synonym">Ncc</name>
    <name evidence="11" type="synonym">Tsc</name>
</gene>
<evidence type="ECO:0000250" key="1">
    <source>
        <dbReference type="UniProtKB" id="P55017"/>
    </source>
</evidence>
<evidence type="ECO:0000255" key="2"/>
<evidence type="ECO:0000269" key="3">
    <source>
    </source>
</evidence>
<evidence type="ECO:0000269" key="4">
    <source>
    </source>
</evidence>
<evidence type="ECO:0000269" key="5">
    <source>
    </source>
</evidence>
<evidence type="ECO:0000269" key="6">
    <source>
    </source>
</evidence>
<evidence type="ECO:0000269" key="7">
    <source>
    </source>
</evidence>
<evidence type="ECO:0000269" key="8">
    <source>
    </source>
</evidence>
<evidence type="ECO:0000269" key="9">
    <source>
    </source>
</evidence>
<evidence type="ECO:0000269" key="10">
    <source>
    </source>
</evidence>
<evidence type="ECO:0000303" key="11">
    <source>
    </source>
</evidence>
<evidence type="ECO:0000303" key="12">
    <source>
    </source>
</evidence>
<evidence type="ECO:0000305" key="13"/>
<evidence type="ECO:0000312" key="14">
    <source>
        <dbReference type="MGI" id="MGI:108114"/>
    </source>
</evidence>
<evidence type="ECO:0007744" key="15">
    <source>
    </source>
</evidence>
<sequence>MAELPVTELPGDALCSGRFTISTLMGGDEPPPAACDSSQPSHLTHGSTLYMRTFGYNTIDVVPAYEHYANSALPGEPRKVRPTLADLHSFLKQEGSHLHALAFDGRQGRELTDGLVEDETGTNSEKSPGEPVRFGWVKGVMIRCMLNIWGVILYLRLPWITAQAGIVLTWLIILLSVMVTSITGLSISAISTNGKVKSGGTYFLISRSLGPELGGSIGLIFAFANAVGVAMHTVGFAETVRDLLQEYGTPIVDPINDIRIIGVVTVTVLLAISLAGMEWESKAQVLFFLVIMVSFANYLVGTLIPASEDKASKGFYSYHGDIFVQNLVPDWRGIDGSFFGMFSIFFPSATGILAGANISGDLKDPAVAIPKGTLMAIFWTTISYLAISATIGSCVVRDASGDVNDTMTPGPGPCEGLACGYGWNFTECSQQRSCRYGLINYYQTMSMVSAFAPLITAGIFGATLSSALACLVSAAKVFQCLCEDQLYPLIGFFGKGYGKNREPVRGYLLAYAIAVAFIIIAELNTIAPIISNFFLCSYALINFSCFHASITNSPGWRPSFRYYSKWAALFGAVISVVIMFLLTWWAALIAIGVVLFLLLYVIYKKPEVNWGSSVQAGSYNLALSYSVGLNEVEDHIKNYRPQCLVLTGPPNFRPALVDFVSTFTQNLSLMICGHVLIGPGKQRVPELRLIASGHTKWLNKRKIKAFYSDVIAEDLRSGVQILMQASGLGRMKPNILVVGFKRNWQSAHPATVEDYIGVLHDAFDFNYGVCVMRMREGLNVSEALQTHTTPEALIQEEQASTIFQSEQGKKTIDIYWLFDDGGLTLLIPYLLHRKKRWGKCKIRVFVGGQINRMDEERKAIISLLSKFRLGFHEVHVLPDINQKPQAEHTKRFEDMIAPFRLNDGFKDEATVTEMRRDCPWKISDEEINKNRIKSLRQVRLSEILLDYSRDAALIILTLPIGRKGKCPSSLYMAWLETLSQDLRPPVLLIRGNQENVLTFYCQ</sequence>
<proteinExistence type="evidence at protein level"/>
<accession>P59158</accession>
<feature type="chain" id="PRO_0000178027" description="Solute carrier family 12 member 3">
    <location>
        <begin position="1"/>
        <end position="1002"/>
    </location>
</feature>
<feature type="topological domain" description="Cytoplasmic" evidence="13">
    <location>
        <begin position="1"/>
        <end position="135"/>
    </location>
</feature>
<feature type="transmembrane region" description="Discontinuously helical; Name=1" evidence="1">
    <location>
        <begin position="136"/>
        <end position="165"/>
    </location>
</feature>
<feature type="transmembrane region" description="Helical; Name=2" evidence="1">
    <location>
        <begin position="166"/>
        <end position="187"/>
    </location>
</feature>
<feature type="topological domain" description="Cytoplasmic" evidence="13">
    <location>
        <begin position="188"/>
        <end position="218"/>
    </location>
</feature>
<feature type="transmembrane region" description="Helical; Name=3" evidence="1">
    <location>
        <begin position="219"/>
        <end position="241"/>
    </location>
</feature>
<feature type="topological domain" description="Extracellular" evidence="13">
    <location>
        <begin position="242"/>
        <end position="253"/>
    </location>
</feature>
<feature type="transmembrane region" description="Helical; Name=4" evidence="1">
    <location>
        <begin position="254"/>
        <end position="278"/>
    </location>
</feature>
<feature type="transmembrane region" description="Helical; Name=5" evidence="1">
    <location>
        <begin position="279"/>
        <end position="301"/>
    </location>
</feature>
<feature type="topological domain" description="Extracellular" evidence="13">
    <location>
        <begin position="302"/>
        <end position="336"/>
    </location>
</feature>
<feature type="transmembrane region" description="Discontinuously helical; Name=6" evidence="1">
    <location>
        <begin position="337"/>
        <end position="358"/>
    </location>
</feature>
<feature type="topological domain" description="Cytoplasmic" evidence="13">
    <location>
        <begin position="359"/>
        <end position="369"/>
    </location>
</feature>
<feature type="transmembrane region" description="Helical; Name=7" evidence="1">
    <location>
        <begin position="370"/>
        <end position="391"/>
    </location>
</feature>
<feature type="topological domain" description="Extracellular" evidence="13">
    <location>
        <begin position="392"/>
        <end position="451"/>
    </location>
</feature>
<feature type="transmembrane region" description="Helical; Name=8" evidence="1">
    <location>
        <begin position="452"/>
        <end position="475"/>
    </location>
</feature>
<feature type="topological domain" description="Cytoplasmic" evidence="13">
    <location>
        <begin position="476"/>
        <end position="505"/>
    </location>
</feature>
<feature type="transmembrane region" description="Helical; Name=9" evidence="1">
    <location>
        <begin position="506"/>
        <end position="520"/>
    </location>
</feature>
<feature type="topological domain" description="Extracellular" evidence="13">
    <location>
        <begin position="521"/>
        <end position="525"/>
    </location>
</feature>
<feature type="transmembrane region" description="Helical; Name=10" evidence="1">
    <location>
        <begin position="526"/>
        <end position="542"/>
    </location>
</feature>
<feature type="topological domain" description="Cytoplasmic" evidence="13">
    <location>
        <begin position="543"/>
        <end position="565"/>
    </location>
</feature>
<feature type="transmembrane region" description="Helical; Name=11" evidence="1">
    <location>
        <begin position="566"/>
        <end position="585"/>
    </location>
</feature>
<feature type="transmembrane region" description="Helical; Name=12" evidence="1">
    <location>
        <begin position="586"/>
        <end position="597"/>
    </location>
</feature>
<feature type="topological domain" description="Cytoplasmic" evidence="13">
    <location>
        <begin position="598"/>
        <end position="1002"/>
    </location>
</feature>
<feature type="region of interest" description="Scissor helix" evidence="1">
    <location>
        <begin position="613"/>
        <end position="628"/>
    </location>
</feature>
<feature type="binding site" evidence="1">
    <location>
        <position position="146"/>
    </location>
    <ligand>
        <name>Na(+)</name>
        <dbReference type="ChEBI" id="CHEBI:29101"/>
    </ligand>
</feature>
<feature type="binding site" evidence="1">
    <location>
        <position position="149"/>
    </location>
    <ligand>
        <name>Na(+)</name>
        <dbReference type="ChEBI" id="CHEBI:29101"/>
    </ligand>
</feature>
<feature type="binding site" evidence="1">
    <location>
        <position position="351"/>
    </location>
    <ligand>
        <name>chloride</name>
        <dbReference type="ChEBI" id="CHEBI:17996"/>
    </ligand>
</feature>
<feature type="binding site" evidence="1">
    <location>
        <position position="352"/>
    </location>
    <ligand>
        <name>chloride</name>
        <dbReference type="ChEBI" id="CHEBI:17996"/>
    </ligand>
</feature>
<feature type="binding site" evidence="1">
    <location>
        <position position="353"/>
    </location>
    <ligand>
        <name>chloride</name>
        <dbReference type="ChEBI" id="CHEBI:17996"/>
    </ligand>
</feature>
<feature type="binding site" evidence="1">
    <location>
        <position position="462"/>
    </location>
    <ligand>
        <name>Na(+)</name>
        <dbReference type="ChEBI" id="CHEBI:29101"/>
    </ligand>
</feature>
<feature type="binding site" evidence="1">
    <location>
        <position position="465"/>
    </location>
    <ligand>
        <name>Na(+)</name>
        <dbReference type="ChEBI" id="CHEBI:29101"/>
    </ligand>
</feature>
<feature type="binding site" evidence="1">
    <location>
        <position position="466"/>
    </location>
    <ligand>
        <name>Na(+)</name>
        <dbReference type="ChEBI" id="CHEBI:29101"/>
    </ligand>
</feature>
<feature type="binding site" evidence="1">
    <location>
        <position position="538"/>
    </location>
    <ligand>
        <name>chloride</name>
        <dbReference type="ChEBI" id="CHEBI:17996"/>
    </ligand>
</feature>
<feature type="binding site" evidence="1">
    <location>
        <position position="646"/>
    </location>
    <ligand>
        <name>ATP</name>
        <dbReference type="ChEBI" id="CHEBI:30616"/>
    </ligand>
</feature>
<feature type="binding site" evidence="1">
    <location>
        <position position="653"/>
    </location>
    <ligand>
        <name>ATP</name>
        <dbReference type="ChEBI" id="CHEBI:30616"/>
    </ligand>
</feature>
<feature type="binding site" evidence="1">
    <location>
        <position position="675"/>
    </location>
    <ligand>
        <name>ATP</name>
        <dbReference type="ChEBI" id="CHEBI:30616"/>
    </ligand>
</feature>
<feature type="binding site" evidence="1">
    <location>
        <position position="739"/>
    </location>
    <ligand>
        <name>ATP</name>
        <dbReference type="ChEBI" id="CHEBI:30616"/>
    </ligand>
</feature>
<feature type="binding site" evidence="1">
    <location>
        <position position="778"/>
    </location>
    <ligand>
        <name>ATP</name>
        <dbReference type="ChEBI" id="CHEBI:30616"/>
    </ligand>
</feature>
<feature type="binding site" evidence="1">
    <location>
        <position position="779"/>
    </location>
    <ligand>
        <name>ATP</name>
        <dbReference type="ChEBI" id="CHEBI:30616"/>
    </ligand>
</feature>
<feature type="modified residue" description="Phosphoserine" evidence="15">
    <location>
        <position position="41"/>
    </location>
</feature>
<feature type="modified residue" description="Phosphothreonine" evidence="1">
    <location>
        <position position="44"/>
    </location>
</feature>
<feature type="modified residue" description="Phosphoserine" evidence="15">
    <location>
        <position position="47"/>
    </location>
</feature>
<feature type="modified residue" description="Phosphothreonine" evidence="15">
    <location>
        <position position="48"/>
    </location>
</feature>
<feature type="modified residue" description="Phosphothreonine" evidence="4 15">
    <location>
        <position position="53"/>
    </location>
</feature>
<feature type="modified residue" description="Phosphothreonine" evidence="4 15">
    <location>
        <position position="58"/>
    </location>
</feature>
<feature type="modified residue" description="Phosphoserine" evidence="4 15">
    <location>
        <position position="71"/>
    </location>
</feature>
<feature type="modified residue" description="Phosphoserine" evidence="1">
    <location>
        <position position="89"/>
    </location>
</feature>
<feature type="modified residue" description="Phosphothreonine" evidence="15">
    <location>
        <position position="122"/>
    </location>
</feature>
<feature type="modified residue" description="Phosphoserine" evidence="15">
    <location>
        <position position="124"/>
    </location>
</feature>
<feature type="glycosylation site" description="N-linked (GlcNAc...) asparagine" evidence="2">
    <location>
        <position position="404"/>
    </location>
</feature>
<feature type="glycosylation site" description="N-linked (GlcNAc...) asparagine" evidence="2">
    <location>
        <position position="424"/>
    </location>
</feature>
<feature type="disulfide bond" evidence="1">
    <location>
        <begin position="414"/>
        <end position="419"/>
    </location>
</feature>
<feature type="disulfide bond" evidence="1">
    <location>
        <begin position="428"/>
        <end position="434"/>
    </location>
</feature>
<feature type="mutagenesis site" description="Reduced phosphorylation by OXSR1/OSR1 and STK39/SPAK; when associated with A-58 and A-71. Substantial reduction in MAPK1/3 (ERK1/2) phosphorylation in response to IL18, with or without IL12." evidence="4 8">
    <original>T</original>
    <variation>A</variation>
    <location>
        <position position="53"/>
    </location>
</feature>
<feature type="mutagenesis site" description="Reduced phosphorylation by OXSR1/OSR1 and STK39/SPAK; when associated with A-53 and A-71. No effect on MAPK1/3 (ERK1/2) phosphorylation in response to IL18, with or without IL12. Substantial reduction in MAPK1/3 (ERK1/2) phosphorylation in response to IL18, with or without IL12; when associated with A-53 and A-71." evidence="4 8">
    <original>T</original>
    <variation>A</variation>
    <location>
        <position position="58"/>
    </location>
</feature>
<feature type="mutagenesis site" description="Reduced phosphorylation by OXSR1/OSR1 and STK39/SPAK; when associated with A-53 and A-58. No effect on MAPK1/3 (ERK1/2) phosphorylation in response to IL18, with or without IL12. Substantial reduction in MAPK1/3 (ERK1/2) phosphorylation in response to IL18, with or without IL12; when associated with A-53 and A-58." evidence="4 8">
    <original>S</original>
    <variation>A</variation>
    <location>
        <position position="71"/>
    </location>
</feature>
<feature type="mutagenesis site" description="Knockin mice display typical Gitelman syndrome features, characterized by hypokalemia, hypomagnesemia and increased fractional excretion of K(+) and Mg(2+) with a normal blood pressure level; when associated with S-210." evidence="10">
    <original>R</original>
    <variation>Q</variation>
    <location>
        <position position="156"/>
    </location>
</feature>
<feature type="mutagenesis site" description="Knockin mice display typical Gitelman syndrome features, characterized by hypokalemia, hypomagnesemia and increased fractional excretion of K(+) and Mg(2+) with a normal blood pressure level; when associated with Q-156." evidence="10">
    <original>G</original>
    <variation>S</variation>
    <location>
        <position position="210"/>
    </location>
</feature>
<feature type="mutagenesis site" description="Does not affect protein processing and glycosylation." evidence="3">
    <original>A</original>
    <variation>T</variation>
    <location>
        <position position="224"/>
    </location>
</feature>
<feature type="mutagenesis site" description="Impairs protein processing and glycosylation." evidence="3">
    <original>P</original>
    <variation>L</variation>
    <location>
        <position position="347"/>
    </location>
</feature>
<feature type="mutagenesis site" description="Does not affect protein processing and glycosylation. Decreases localization at the plasma membrane." evidence="3">
    <original>A</original>
    <variation>V</variation>
    <location>
        <position position="586"/>
    </location>
</feature>
<feature type="mutagenesis site" description="Does not affect protein processing and glycosylation. Decreases localization at the plasma membrane and affinity for sodium and chloride ions." evidence="3">
    <original>G</original>
    <variation>S</variation>
    <location>
        <position position="611"/>
    </location>
</feature>
<feature type="mutagenesis site" description="Does not affect protein processing and glycosylation. Decreases localization at the plasma membrane." evidence="3">
    <original>G</original>
    <variation>V</variation>
    <location>
        <position position="628"/>
    </location>
</feature>
<feature type="mutagenesis site" description="Impairs protein processing and glycosylation." evidence="3">
    <original>L</original>
    <variation>P</variation>
    <location>
        <position position="831"/>
    </location>
</feature>
<feature type="mutagenesis site" description="Does not affect protein processing and glycosylation." evidence="3">
    <original>R</original>
    <variation>C</variation>
    <location>
        <position position="833"/>
    </location>
</feature>
<feature type="mutagenesis site" description="Does not affect protein processing and glycosylation." evidence="3">
    <original>R</original>
    <variation>C</variation>
    <location>
        <position position="900"/>
    </location>
</feature>
<feature type="mutagenesis site" description="Does not affect protein processing and glycosylation. Decreases localization at the plasma membrane." evidence="3">
    <original>R</original>
    <variation>Q</variation>
    <location>
        <position position="936"/>
    </location>
</feature>
<feature type="mutagenesis site" description="Impairs protein processing and glycosylation." evidence="3">
    <location>
        <begin position="949"/>
        <end position="1002"/>
    </location>
</feature>
<feature type="mutagenesis site" description="Impairs protein processing and glycosylation." evidence="3">
    <location>
        <begin position="990"/>
        <end position="1002"/>
    </location>
</feature>
<feature type="mutagenesis site" description="Does not affect protein processing and glycosylation. Decreases localization at the plasma membrane." evidence="3">
    <original>V</original>
    <variation>M</variation>
    <location>
        <position position="996"/>
    </location>
</feature>
<feature type="mutagenesis site" description="Impairs protein processing and glycosylation." evidence="3">
    <original>T</original>
    <variation>I</variation>
    <location>
        <position position="998"/>
    </location>
</feature>
<organism>
    <name type="scientific">Mus musculus</name>
    <name type="common">Mouse</name>
    <dbReference type="NCBI Taxonomy" id="10090"/>
    <lineage>
        <taxon>Eukaryota</taxon>
        <taxon>Metazoa</taxon>
        <taxon>Chordata</taxon>
        <taxon>Craniata</taxon>
        <taxon>Vertebrata</taxon>
        <taxon>Euteleostomi</taxon>
        <taxon>Mammalia</taxon>
        <taxon>Eutheria</taxon>
        <taxon>Euarchontoglires</taxon>
        <taxon>Glires</taxon>
        <taxon>Rodentia</taxon>
        <taxon>Myomorpha</taxon>
        <taxon>Muroidea</taxon>
        <taxon>Muridae</taxon>
        <taxon>Murinae</taxon>
        <taxon>Mus</taxon>
        <taxon>Mus</taxon>
    </lineage>
</organism>